<dbReference type="EMBL" id="CP000252">
    <property type="protein sequence ID" value="ABC76182.1"/>
    <property type="molecule type" value="Genomic_DNA"/>
</dbReference>
<dbReference type="RefSeq" id="WP_011416216.1">
    <property type="nucleotide sequence ID" value="NC_007759.1"/>
</dbReference>
<dbReference type="SMR" id="Q2LQ99"/>
<dbReference type="FunCoup" id="Q2LQ99">
    <property type="interactions" value="498"/>
</dbReference>
<dbReference type="STRING" id="56780.SYN_00987"/>
<dbReference type="KEGG" id="sat:SYN_00987"/>
<dbReference type="eggNOG" id="COG0089">
    <property type="taxonomic scope" value="Bacteria"/>
</dbReference>
<dbReference type="HOGENOM" id="CLU_037562_3_2_7"/>
<dbReference type="InParanoid" id="Q2LQ99"/>
<dbReference type="OrthoDB" id="9793353at2"/>
<dbReference type="Proteomes" id="UP000001933">
    <property type="component" value="Chromosome"/>
</dbReference>
<dbReference type="GO" id="GO:1990904">
    <property type="term" value="C:ribonucleoprotein complex"/>
    <property type="evidence" value="ECO:0007669"/>
    <property type="project" value="UniProtKB-KW"/>
</dbReference>
<dbReference type="GO" id="GO:0005840">
    <property type="term" value="C:ribosome"/>
    <property type="evidence" value="ECO:0007669"/>
    <property type="project" value="UniProtKB-KW"/>
</dbReference>
<dbReference type="GO" id="GO:0019843">
    <property type="term" value="F:rRNA binding"/>
    <property type="evidence" value="ECO:0007669"/>
    <property type="project" value="UniProtKB-UniRule"/>
</dbReference>
<dbReference type="GO" id="GO:0003735">
    <property type="term" value="F:structural constituent of ribosome"/>
    <property type="evidence" value="ECO:0007669"/>
    <property type="project" value="InterPro"/>
</dbReference>
<dbReference type="GO" id="GO:0006412">
    <property type="term" value="P:translation"/>
    <property type="evidence" value="ECO:0007669"/>
    <property type="project" value="UniProtKB-UniRule"/>
</dbReference>
<dbReference type="FunFam" id="3.30.70.330:FF:000001">
    <property type="entry name" value="50S ribosomal protein L23"/>
    <property type="match status" value="1"/>
</dbReference>
<dbReference type="Gene3D" id="3.30.70.330">
    <property type="match status" value="1"/>
</dbReference>
<dbReference type="HAMAP" id="MF_01369_B">
    <property type="entry name" value="Ribosomal_uL23_B"/>
    <property type="match status" value="1"/>
</dbReference>
<dbReference type="InterPro" id="IPR012677">
    <property type="entry name" value="Nucleotide-bd_a/b_plait_sf"/>
</dbReference>
<dbReference type="InterPro" id="IPR013025">
    <property type="entry name" value="Ribosomal_uL23-like"/>
</dbReference>
<dbReference type="InterPro" id="IPR012678">
    <property type="entry name" value="Ribosomal_uL23/eL15/eS24_sf"/>
</dbReference>
<dbReference type="NCBIfam" id="NF004359">
    <property type="entry name" value="PRK05738.1-3"/>
    <property type="match status" value="1"/>
</dbReference>
<dbReference type="NCBIfam" id="NF004363">
    <property type="entry name" value="PRK05738.2-4"/>
    <property type="match status" value="1"/>
</dbReference>
<dbReference type="NCBIfam" id="NF004366">
    <property type="entry name" value="PRK05738.3-2"/>
    <property type="match status" value="1"/>
</dbReference>
<dbReference type="PANTHER" id="PTHR11620">
    <property type="entry name" value="60S RIBOSOMAL PROTEIN L23A"/>
    <property type="match status" value="1"/>
</dbReference>
<dbReference type="Pfam" id="PF00276">
    <property type="entry name" value="Ribosomal_L23"/>
    <property type="match status" value="1"/>
</dbReference>
<dbReference type="SUPFAM" id="SSF54189">
    <property type="entry name" value="Ribosomal proteins S24e, L23 and L15e"/>
    <property type="match status" value="1"/>
</dbReference>
<feature type="chain" id="PRO_0000272862" description="Large ribosomal subunit protein uL23">
    <location>
        <begin position="1"/>
        <end position="96"/>
    </location>
</feature>
<accession>Q2LQ99</accession>
<comment type="function">
    <text evidence="1">One of the early assembly proteins it binds 23S rRNA. One of the proteins that surrounds the polypeptide exit tunnel on the outside of the ribosome. Forms the main docking site for trigger factor binding to the ribosome.</text>
</comment>
<comment type="subunit">
    <text evidence="1">Part of the 50S ribosomal subunit. Contacts protein L29, and trigger factor when it is bound to the ribosome.</text>
</comment>
<comment type="similarity">
    <text evidence="1">Belongs to the universal ribosomal protein uL23 family.</text>
</comment>
<proteinExistence type="inferred from homology"/>
<gene>
    <name evidence="1" type="primary">rplW</name>
    <name type="ordered locus">SYNAS_03030</name>
    <name type="ORF">SYN_00987</name>
</gene>
<name>RL23_SYNAS</name>
<evidence type="ECO:0000255" key="1">
    <source>
        <dbReference type="HAMAP-Rule" id="MF_01369"/>
    </source>
</evidence>
<evidence type="ECO:0000305" key="2"/>
<organism>
    <name type="scientific">Syntrophus aciditrophicus (strain SB)</name>
    <dbReference type="NCBI Taxonomy" id="56780"/>
    <lineage>
        <taxon>Bacteria</taxon>
        <taxon>Pseudomonadati</taxon>
        <taxon>Thermodesulfobacteriota</taxon>
        <taxon>Syntrophia</taxon>
        <taxon>Syntrophales</taxon>
        <taxon>Syntrophaceae</taxon>
        <taxon>Syntrophus</taxon>
    </lineage>
</organism>
<sequence length="96" mass="11302">MTELHQIVKRMLVTEKSTLEKDEKNKYYFEVDRRANKIEIRKAVERLLKVTVDDVHVINIKGKKKRTGRIIGKRRDWKKAVVTLAQGNTIDIYHGV</sequence>
<keyword id="KW-1185">Reference proteome</keyword>
<keyword id="KW-0687">Ribonucleoprotein</keyword>
<keyword id="KW-0689">Ribosomal protein</keyword>
<keyword id="KW-0694">RNA-binding</keyword>
<keyword id="KW-0699">rRNA-binding</keyword>
<protein>
    <recommendedName>
        <fullName evidence="1">Large ribosomal subunit protein uL23</fullName>
    </recommendedName>
    <alternativeName>
        <fullName evidence="2">50S ribosomal protein L23</fullName>
    </alternativeName>
</protein>
<reference key="1">
    <citation type="journal article" date="2007" name="Proc. Natl. Acad. Sci. U.S.A.">
        <title>The genome of Syntrophus aciditrophicus: life at the thermodynamic limit of microbial growth.</title>
        <authorList>
            <person name="McInerney M.J."/>
            <person name="Rohlin L."/>
            <person name="Mouttaki H."/>
            <person name="Kim U."/>
            <person name="Krupp R.S."/>
            <person name="Rios-Hernandez L."/>
            <person name="Sieber J."/>
            <person name="Struchtemeyer C.G."/>
            <person name="Bhattacharyya A."/>
            <person name="Campbell J.W."/>
            <person name="Gunsalus R.P."/>
        </authorList>
    </citation>
    <scope>NUCLEOTIDE SEQUENCE [LARGE SCALE GENOMIC DNA]</scope>
    <source>
        <strain>SB</strain>
    </source>
</reference>